<gene>
    <name evidence="1" type="primary">tsf</name>
    <name type="ordered locus">Oant_2030</name>
</gene>
<reference key="1">
    <citation type="journal article" date="2011" name="J. Bacteriol.">
        <title>Genome of Ochrobactrum anthropi ATCC 49188 T, a versatile opportunistic pathogen and symbiont of several eukaryotic hosts.</title>
        <authorList>
            <person name="Chain P.S."/>
            <person name="Lang D.M."/>
            <person name="Comerci D.J."/>
            <person name="Malfatti S.A."/>
            <person name="Vergez L.M."/>
            <person name="Shin M."/>
            <person name="Ugalde R.A."/>
            <person name="Garcia E."/>
            <person name="Tolmasky M.E."/>
        </authorList>
    </citation>
    <scope>NUCLEOTIDE SEQUENCE [LARGE SCALE GENOMIC DNA]</scope>
    <source>
        <strain>ATCC 49188 / DSM 6882 / CCUG 24695 / JCM 21032 / LMG 3331 / NBRC 15819 / NCTC 12168 / Alc 37</strain>
    </source>
</reference>
<name>EFTS_BRUA4</name>
<sequence length="305" mass="31593">MSISASLVKELRDLTGAGMMDCKTALAETNGDIEAAVDWLRAKGIAKADKKAGRTAAEGLVGVAASGNKAVVVEVNSETDFVARNDAFQDLVRKIAQAALSTDGSTEAVANANVDGKTVTETAKDAVATIGENIGFRRSAALTVPQGVVATYIHNGVADGLGKLGVLVAIETAGDAEAANAFGRQVAMHVAAINPLALTAEDVDPAAAEREKAIFIEQARESGKPDNIIEKMIEGRMRKFYEEVVLLSQAFVINPDLTVAAALKEAEKTIGAPAKITGFVRVALGEGIEKEETDFAAEVAAAAKG</sequence>
<comment type="function">
    <text evidence="1">Associates with the EF-Tu.GDP complex and induces the exchange of GDP to GTP. It remains bound to the aminoacyl-tRNA.EF-Tu.GTP complex up to the GTP hydrolysis stage on the ribosome.</text>
</comment>
<comment type="subcellular location">
    <subcellularLocation>
        <location evidence="1">Cytoplasm</location>
    </subcellularLocation>
</comment>
<comment type="similarity">
    <text evidence="1">Belongs to the EF-Ts family.</text>
</comment>
<comment type="sequence caution" evidence="2">
    <conflict type="erroneous initiation">
        <sequence resource="EMBL-CDS" id="ABS14746"/>
    </conflict>
</comment>
<feature type="chain" id="PRO_0000323459" description="Elongation factor Ts">
    <location>
        <begin position="1"/>
        <end position="305"/>
    </location>
</feature>
<feature type="region of interest" description="Involved in Mg(2+) ion dislocation from EF-Tu" evidence="1">
    <location>
        <begin position="79"/>
        <end position="82"/>
    </location>
</feature>
<evidence type="ECO:0000255" key="1">
    <source>
        <dbReference type="HAMAP-Rule" id="MF_00050"/>
    </source>
</evidence>
<evidence type="ECO:0000305" key="2"/>
<dbReference type="EMBL" id="CP000758">
    <property type="protein sequence ID" value="ABS14746.1"/>
    <property type="status" value="ALT_INIT"/>
    <property type="molecule type" value="Genomic_DNA"/>
</dbReference>
<dbReference type="RefSeq" id="WP_036578226.1">
    <property type="nucleotide sequence ID" value="NC_009667.1"/>
</dbReference>
<dbReference type="SMR" id="A6X0J2"/>
<dbReference type="STRING" id="439375.Oant_2030"/>
<dbReference type="GeneID" id="61317513"/>
<dbReference type="KEGG" id="oan:Oant_2030"/>
<dbReference type="PATRIC" id="fig|439375.7.peg.2134"/>
<dbReference type="eggNOG" id="COG0264">
    <property type="taxonomic scope" value="Bacteria"/>
</dbReference>
<dbReference type="HOGENOM" id="CLU_047155_2_0_5"/>
<dbReference type="PhylomeDB" id="A6X0J2"/>
<dbReference type="Proteomes" id="UP000002301">
    <property type="component" value="Chromosome 1"/>
</dbReference>
<dbReference type="GO" id="GO:0005737">
    <property type="term" value="C:cytoplasm"/>
    <property type="evidence" value="ECO:0007669"/>
    <property type="project" value="UniProtKB-SubCell"/>
</dbReference>
<dbReference type="GO" id="GO:0003746">
    <property type="term" value="F:translation elongation factor activity"/>
    <property type="evidence" value="ECO:0007669"/>
    <property type="project" value="UniProtKB-UniRule"/>
</dbReference>
<dbReference type="CDD" id="cd14275">
    <property type="entry name" value="UBA_EF-Ts"/>
    <property type="match status" value="1"/>
</dbReference>
<dbReference type="FunFam" id="1.10.286.20:FF:000001">
    <property type="entry name" value="Elongation factor Ts"/>
    <property type="match status" value="1"/>
</dbReference>
<dbReference type="FunFam" id="1.10.8.10:FF:000001">
    <property type="entry name" value="Elongation factor Ts"/>
    <property type="match status" value="1"/>
</dbReference>
<dbReference type="Gene3D" id="1.10.286.20">
    <property type="match status" value="1"/>
</dbReference>
<dbReference type="Gene3D" id="1.10.8.10">
    <property type="entry name" value="DNA helicase RuvA subunit, C-terminal domain"/>
    <property type="match status" value="1"/>
</dbReference>
<dbReference type="Gene3D" id="3.30.479.20">
    <property type="entry name" value="Elongation factor Ts, dimerisation domain"/>
    <property type="match status" value="2"/>
</dbReference>
<dbReference type="HAMAP" id="MF_00050">
    <property type="entry name" value="EF_Ts"/>
    <property type="match status" value="1"/>
</dbReference>
<dbReference type="InterPro" id="IPR036402">
    <property type="entry name" value="EF-Ts_dimer_sf"/>
</dbReference>
<dbReference type="InterPro" id="IPR001816">
    <property type="entry name" value="Transl_elong_EFTs/EF1B"/>
</dbReference>
<dbReference type="InterPro" id="IPR014039">
    <property type="entry name" value="Transl_elong_EFTs/EF1B_dimer"/>
</dbReference>
<dbReference type="InterPro" id="IPR018101">
    <property type="entry name" value="Transl_elong_Ts_CS"/>
</dbReference>
<dbReference type="InterPro" id="IPR009060">
    <property type="entry name" value="UBA-like_sf"/>
</dbReference>
<dbReference type="NCBIfam" id="TIGR00116">
    <property type="entry name" value="tsf"/>
    <property type="match status" value="1"/>
</dbReference>
<dbReference type="PANTHER" id="PTHR11741">
    <property type="entry name" value="ELONGATION FACTOR TS"/>
    <property type="match status" value="1"/>
</dbReference>
<dbReference type="PANTHER" id="PTHR11741:SF0">
    <property type="entry name" value="ELONGATION FACTOR TS, MITOCHONDRIAL"/>
    <property type="match status" value="1"/>
</dbReference>
<dbReference type="Pfam" id="PF00889">
    <property type="entry name" value="EF_TS"/>
    <property type="match status" value="1"/>
</dbReference>
<dbReference type="SUPFAM" id="SSF54713">
    <property type="entry name" value="Elongation factor Ts (EF-Ts), dimerisation domain"/>
    <property type="match status" value="2"/>
</dbReference>
<dbReference type="SUPFAM" id="SSF46934">
    <property type="entry name" value="UBA-like"/>
    <property type="match status" value="1"/>
</dbReference>
<dbReference type="PROSITE" id="PS01127">
    <property type="entry name" value="EF_TS_2"/>
    <property type="match status" value="1"/>
</dbReference>
<protein>
    <recommendedName>
        <fullName evidence="1">Elongation factor Ts</fullName>
        <shortName evidence="1">EF-Ts</shortName>
    </recommendedName>
</protein>
<proteinExistence type="inferred from homology"/>
<keyword id="KW-0963">Cytoplasm</keyword>
<keyword id="KW-0251">Elongation factor</keyword>
<keyword id="KW-0648">Protein biosynthesis</keyword>
<keyword id="KW-1185">Reference proteome</keyword>
<organism>
    <name type="scientific">Brucella anthropi (strain ATCC 49188 / DSM 6882 / CCUG 24695 / JCM 21032 / LMG 3331 / NBRC 15819 / NCTC 12168 / Alc 37)</name>
    <name type="common">Ochrobactrum anthropi</name>
    <dbReference type="NCBI Taxonomy" id="439375"/>
    <lineage>
        <taxon>Bacteria</taxon>
        <taxon>Pseudomonadati</taxon>
        <taxon>Pseudomonadota</taxon>
        <taxon>Alphaproteobacteria</taxon>
        <taxon>Hyphomicrobiales</taxon>
        <taxon>Brucellaceae</taxon>
        <taxon>Brucella/Ochrobactrum group</taxon>
        <taxon>Brucella</taxon>
    </lineage>
</organism>
<accession>A6X0J2</accession>